<dbReference type="EC" id="5.1.3.32" evidence="1"/>
<dbReference type="EMBL" id="CP000247">
    <property type="protein sequence ID" value="ABG72067.1"/>
    <property type="molecule type" value="Genomic_DNA"/>
</dbReference>
<dbReference type="RefSeq" id="WP_000619492.1">
    <property type="nucleotide sequence ID" value="NC_008253.1"/>
</dbReference>
<dbReference type="SMR" id="Q0TAG2"/>
<dbReference type="KEGG" id="ecp:ECP_4111"/>
<dbReference type="HOGENOM" id="CLU_100689_2_0_6"/>
<dbReference type="UniPathway" id="UPA00125"/>
<dbReference type="Proteomes" id="UP000009182">
    <property type="component" value="Chromosome"/>
</dbReference>
<dbReference type="GO" id="GO:0005737">
    <property type="term" value="C:cytoplasm"/>
    <property type="evidence" value="ECO:0007669"/>
    <property type="project" value="UniProtKB-SubCell"/>
</dbReference>
<dbReference type="GO" id="GO:0062192">
    <property type="term" value="F:L-rhamnose mutarotase activity"/>
    <property type="evidence" value="ECO:0007669"/>
    <property type="project" value="UniProtKB-EC"/>
</dbReference>
<dbReference type="GO" id="GO:0019301">
    <property type="term" value="P:rhamnose catabolic process"/>
    <property type="evidence" value="ECO:0007669"/>
    <property type="project" value="TreeGrafter"/>
</dbReference>
<dbReference type="FunFam" id="3.30.70.100:FF:000013">
    <property type="entry name" value="L-rhamnose mutarotase"/>
    <property type="match status" value="1"/>
</dbReference>
<dbReference type="Gene3D" id="3.30.70.100">
    <property type="match status" value="1"/>
</dbReference>
<dbReference type="HAMAP" id="MF_01663">
    <property type="entry name" value="L_rham_rotase"/>
    <property type="match status" value="1"/>
</dbReference>
<dbReference type="InterPro" id="IPR011008">
    <property type="entry name" value="Dimeric_a/b-barrel"/>
</dbReference>
<dbReference type="InterPro" id="IPR013448">
    <property type="entry name" value="L-rhamnose_mutarotase"/>
</dbReference>
<dbReference type="InterPro" id="IPR008000">
    <property type="entry name" value="Rham/fucose_mutarotase"/>
</dbReference>
<dbReference type="NCBIfam" id="TIGR02625">
    <property type="entry name" value="YiiL_rotase"/>
    <property type="match status" value="1"/>
</dbReference>
<dbReference type="PANTHER" id="PTHR34389">
    <property type="entry name" value="L-RHAMNOSE MUTAROTASE"/>
    <property type="match status" value="1"/>
</dbReference>
<dbReference type="PANTHER" id="PTHR34389:SF2">
    <property type="entry name" value="L-RHAMNOSE MUTAROTASE"/>
    <property type="match status" value="1"/>
</dbReference>
<dbReference type="Pfam" id="PF05336">
    <property type="entry name" value="rhaM"/>
    <property type="match status" value="1"/>
</dbReference>
<dbReference type="SUPFAM" id="SSF54909">
    <property type="entry name" value="Dimeric alpha+beta barrel"/>
    <property type="match status" value="1"/>
</dbReference>
<evidence type="ECO:0000255" key="1">
    <source>
        <dbReference type="HAMAP-Rule" id="MF_01663"/>
    </source>
</evidence>
<protein>
    <recommendedName>
        <fullName evidence="1">L-rhamnose mutarotase</fullName>
        <ecNumber evidence="1">5.1.3.32</ecNumber>
    </recommendedName>
    <alternativeName>
        <fullName evidence="1">Rhamnose 1-epimerase</fullName>
    </alternativeName>
    <alternativeName>
        <fullName evidence="1">Type-3 mutarotase</fullName>
    </alternativeName>
</protein>
<name>RHAM_ECOL5</name>
<organism>
    <name type="scientific">Escherichia coli O6:K15:H31 (strain 536 / UPEC)</name>
    <dbReference type="NCBI Taxonomy" id="362663"/>
    <lineage>
        <taxon>Bacteria</taxon>
        <taxon>Pseudomonadati</taxon>
        <taxon>Pseudomonadota</taxon>
        <taxon>Gammaproteobacteria</taxon>
        <taxon>Enterobacterales</taxon>
        <taxon>Enterobacteriaceae</taxon>
        <taxon>Escherichia</taxon>
    </lineage>
</organism>
<feature type="chain" id="PRO_0000344577" description="L-rhamnose mutarotase">
    <location>
        <begin position="1"/>
        <end position="104"/>
    </location>
</feature>
<feature type="active site" description="Proton donor" evidence="1">
    <location>
        <position position="22"/>
    </location>
</feature>
<feature type="binding site" evidence="1">
    <location>
        <position position="18"/>
    </location>
    <ligand>
        <name>substrate</name>
    </ligand>
</feature>
<feature type="binding site" evidence="1">
    <location>
        <position position="41"/>
    </location>
    <ligand>
        <name>substrate</name>
    </ligand>
</feature>
<feature type="binding site" evidence="1">
    <location>
        <begin position="76"/>
        <end position="77"/>
    </location>
    <ligand>
        <name>substrate</name>
    </ligand>
</feature>
<proteinExistence type="inferred from homology"/>
<accession>Q0TAG2</accession>
<sequence length="104" mass="12190">MIRKAFVMQVNPDAHEEYQRRHNPIWPELEAVLKSHGAHNYAIYLDKAHNLLFATVEIESEERWNAVASTDVCQRWWKYMTDVMPANADNSPVSSELQEVFYLP</sequence>
<keyword id="KW-0119">Carbohydrate metabolism</keyword>
<keyword id="KW-0963">Cytoplasm</keyword>
<keyword id="KW-0413">Isomerase</keyword>
<keyword id="KW-0684">Rhamnose metabolism</keyword>
<reference key="1">
    <citation type="journal article" date="2006" name="Mol. Microbiol.">
        <title>Role of pathogenicity island-associated integrases in the genome plasticity of uropathogenic Escherichia coli strain 536.</title>
        <authorList>
            <person name="Hochhut B."/>
            <person name="Wilde C."/>
            <person name="Balling G."/>
            <person name="Middendorf B."/>
            <person name="Dobrindt U."/>
            <person name="Brzuszkiewicz E."/>
            <person name="Gottschalk G."/>
            <person name="Carniel E."/>
            <person name="Hacker J."/>
        </authorList>
    </citation>
    <scope>NUCLEOTIDE SEQUENCE [LARGE SCALE GENOMIC DNA]</scope>
    <source>
        <strain>536 / UPEC</strain>
    </source>
</reference>
<comment type="function">
    <text evidence="1">Involved in the anomeric conversion of L-rhamnose.</text>
</comment>
<comment type="catalytic activity">
    <reaction evidence="1">
        <text>alpha-L-rhamnose = beta-L-rhamnose</text>
        <dbReference type="Rhea" id="RHEA:25584"/>
        <dbReference type="ChEBI" id="CHEBI:27586"/>
        <dbReference type="ChEBI" id="CHEBI:27907"/>
        <dbReference type="EC" id="5.1.3.32"/>
    </reaction>
</comment>
<comment type="pathway">
    <text evidence="1">Carbohydrate metabolism; L-rhamnose metabolism.</text>
</comment>
<comment type="subunit">
    <text evidence="1">Homodimer.</text>
</comment>
<comment type="subcellular location">
    <subcellularLocation>
        <location evidence="1">Cytoplasm</location>
    </subcellularLocation>
</comment>
<comment type="similarity">
    <text evidence="1">Belongs to the rhamnose mutarotase family.</text>
</comment>
<gene>
    <name evidence="1" type="primary">rhaM</name>
    <name type="ordered locus">ECP_4111</name>
</gene>